<comment type="function">
    <text evidence="2">Binds water, Ca(2+), Na(+), K(+), fatty acids, hormones, bilirubin and drugs. Its main function is the regulation of the colloidal osmotic pressure of blood.</text>
</comment>
<comment type="subcellular location">
    <subcellularLocation>
        <location>Secreted</location>
    </subcellularLocation>
</comment>
<comment type="tissue specificity">
    <text>Plasma.</text>
</comment>
<comment type="allergen">
    <text evidence="6">Can cause allergic reactions in humans. Binds to IgE. Partially heat-labile allergen that may cause both respiratory and food-allergy symptoms in patients with the bird-egg syndrome.</text>
</comment>
<comment type="similarity">
    <text evidence="5">Belongs to the ALB/AFP/VDB family.</text>
</comment>
<keyword id="KW-0020">Allergen</keyword>
<keyword id="KW-0106">Calcium</keyword>
<keyword id="KW-0186">Copper</keyword>
<keyword id="KW-0903">Direct protein sequencing</keyword>
<keyword id="KW-1015">Disulfide bond</keyword>
<keyword id="KW-0325">Glycoprotein</keyword>
<keyword id="KW-0446">Lipid-binding</keyword>
<keyword id="KW-0479">Metal-binding</keyword>
<keyword id="KW-1185">Reference proteome</keyword>
<keyword id="KW-0677">Repeat</keyword>
<keyword id="KW-0964">Secreted</keyword>
<keyword id="KW-0732">Signal</keyword>
<keyword id="KW-0862">Zinc</keyword>
<organism>
    <name type="scientific">Gallus gallus</name>
    <name type="common">Chicken</name>
    <dbReference type="NCBI Taxonomy" id="9031"/>
    <lineage>
        <taxon>Eukaryota</taxon>
        <taxon>Metazoa</taxon>
        <taxon>Chordata</taxon>
        <taxon>Craniata</taxon>
        <taxon>Vertebrata</taxon>
        <taxon>Euteleostomi</taxon>
        <taxon>Archelosauria</taxon>
        <taxon>Archosauria</taxon>
        <taxon>Dinosauria</taxon>
        <taxon>Saurischia</taxon>
        <taxon>Theropoda</taxon>
        <taxon>Coelurosauria</taxon>
        <taxon>Aves</taxon>
        <taxon>Neognathae</taxon>
        <taxon>Galloanserae</taxon>
        <taxon>Galliformes</taxon>
        <taxon>Phasianidae</taxon>
        <taxon>Phasianinae</taxon>
        <taxon>Gallus</taxon>
    </lineage>
</organism>
<gene>
    <name type="primary">ALB</name>
</gene>
<accession>P19121</accession>
<sequence>MKWVTLISFIFLFSSATSRNLQRFARDAEHKSEIAHRYNDLKEETFKAVAMITFAQYLQRCSYEGLSKLVKDVVDLAQKCVANEDAPECSKPLPSIILDEICQVEKLRDSYGAMADCCSKADPERNECFLSFKVSQPDFVQPYQRPASDVICQEYQDNRVSFLGHFIYSVARRHPFLYAPAILSFAVDFEHALQSCCKESDVGACLDTKEIVMREKAKGVSVKQQYFCGILKQFGDRVFQARQLIYLSQKYPKAPFSEVSKFVHDSIGVHKECCEGDMVECMDDMARMMSNLCSQQDVFSGKIKDCCEKPIVERSQCIMEAEFDEKPADLPSLVEKYIEDKEVCKSFEAGHDAFMAEFVYEYSRRHPEFSIQLIMRIAKGYESLLEKCCKTDNPAECYANAQEQLNQHIKETQDVVKTNCDLLHDHGEADFLKSILIRYTKKMPQVPTDLLLETGKKMTTIGTKCCQLGEDRRMACSEGYLSIVIHDTCRKQETTPINDNVSQCCSQLYANRRPCFTAMGVDTKYVPPPFNPDMFSFDEKLCSAPAEEREVGQMKLLINLIKRKPQMTEEQIKTIADGFTAMVDKCCKQSDINTCFGEEGANLIVQSRATLGIGA</sequence>
<dbReference type="EMBL" id="X60688">
    <property type="protein sequence ID" value="CAA43098.1"/>
    <property type="molecule type" value="mRNA"/>
</dbReference>
<dbReference type="EMBL" id="V00381">
    <property type="protein sequence ID" value="CAA23680.1"/>
    <property type="molecule type" value="Genomic_DNA"/>
</dbReference>
<dbReference type="PIR" id="S15571">
    <property type="entry name" value="ABCHS"/>
</dbReference>
<dbReference type="SMR" id="P19121"/>
<dbReference type="BioGRID" id="676457">
    <property type="interactions" value="1"/>
</dbReference>
<dbReference type="FunCoup" id="P19121">
    <property type="interactions" value="1241"/>
</dbReference>
<dbReference type="IntAct" id="P19121">
    <property type="interactions" value="1"/>
</dbReference>
<dbReference type="STRING" id="9031.ENSGALP00000044604"/>
<dbReference type="Allergome" id="3295">
    <property type="allergen name" value="Gal d 5.0101"/>
</dbReference>
<dbReference type="Allergome" id="363">
    <property type="allergen name" value="Gal d 5"/>
</dbReference>
<dbReference type="GlyCosmos" id="P19121">
    <property type="glycosylation" value="1 site, No reported glycans"/>
</dbReference>
<dbReference type="GlyGen" id="P19121">
    <property type="glycosylation" value="1 site"/>
</dbReference>
<dbReference type="PaxDb" id="9031-ENSGALP00000019031"/>
<dbReference type="VEuPathDB" id="HostDB:geneid_396197"/>
<dbReference type="eggNOG" id="ENOG502R7EA">
    <property type="taxonomic scope" value="Eukaryota"/>
</dbReference>
<dbReference type="InParanoid" id="P19121"/>
<dbReference type="OrthoDB" id="9875082at2759"/>
<dbReference type="PhylomeDB" id="P19121"/>
<dbReference type="Proteomes" id="UP000000539">
    <property type="component" value="Unassembled WGS sequence"/>
</dbReference>
<dbReference type="GO" id="GO:0005737">
    <property type="term" value="C:cytoplasm"/>
    <property type="evidence" value="ECO:0000318"/>
    <property type="project" value="GO_Central"/>
</dbReference>
<dbReference type="GO" id="GO:0005615">
    <property type="term" value="C:extracellular space"/>
    <property type="evidence" value="ECO:0000314"/>
    <property type="project" value="AgBase"/>
</dbReference>
<dbReference type="GO" id="GO:0032991">
    <property type="term" value="C:protein-containing complex"/>
    <property type="evidence" value="ECO:0000250"/>
    <property type="project" value="UniProtKB"/>
</dbReference>
<dbReference type="GO" id="GO:0060417">
    <property type="term" value="C:yolk"/>
    <property type="evidence" value="ECO:0000314"/>
    <property type="project" value="AgBase"/>
</dbReference>
<dbReference type="GO" id="GO:0003677">
    <property type="term" value="F:DNA binding"/>
    <property type="evidence" value="ECO:0000250"/>
    <property type="project" value="UniProtKB"/>
</dbReference>
<dbReference type="GO" id="GO:0005504">
    <property type="term" value="F:fatty acid binding"/>
    <property type="evidence" value="ECO:0000250"/>
    <property type="project" value="UniProtKB"/>
</dbReference>
<dbReference type="GO" id="GO:0046872">
    <property type="term" value="F:metal ion binding"/>
    <property type="evidence" value="ECO:0007669"/>
    <property type="project" value="UniProtKB-KW"/>
</dbReference>
<dbReference type="GO" id="GO:0030170">
    <property type="term" value="F:pyridoxal phosphate binding"/>
    <property type="evidence" value="ECO:0000250"/>
    <property type="project" value="UniProtKB"/>
</dbReference>
<dbReference type="GO" id="GO:0036094">
    <property type="term" value="F:small molecule binding"/>
    <property type="evidence" value="ECO:0000353"/>
    <property type="project" value="AgBase"/>
</dbReference>
<dbReference type="GO" id="GO:0015643">
    <property type="term" value="F:toxic substance binding"/>
    <property type="evidence" value="ECO:0000250"/>
    <property type="project" value="UniProtKB"/>
</dbReference>
<dbReference type="GO" id="GO:0072732">
    <property type="term" value="P:cellular response to calcium ion starvation"/>
    <property type="evidence" value="ECO:0000250"/>
    <property type="project" value="UniProtKB"/>
</dbReference>
<dbReference type="GO" id="GO:0009267">
    <property type="term" value="P:cellular response to starvation"/>
    <property type="evidence" value="ECO:0000250"/>
    <property type="project" value="UniProtKB"/>
</dbReference>
<dbReference type="GO" id="GO:0051902">
    <property type="term" value="P:negative regulation of mitochondrial depolarization"/>
    <property type="evidence" value="ECO:0000250"/>
    <property type="project" value="UniProtKB"/>
</dbReference>
<dbReference type="GO" id="GO:0009615">
    <property type="term" value="P:response to virus"/>
    <property type="evidence" value="ECO:0000314"/>
    <property type="project" value="AgBase"/>
</dbReference>
<dbReference type="GO" id="GO:0033189">
    <property type="term" value="P:response to vitamin A"/>
    <property type="evidence" value="ECO:0000314"/>
    <property type="project" value="AgBase"/>
</dbReference>
<dbReference type="CDD" id="cd00015">
    <property type="entry name" value="ALBUMIN"/>
    <property type="match status" value="3"/>
</dbReference>
<dbReference type="FunFam" id="1.10.246.10:FF:000001">
    <property type="entry name" value="Serum albumin"/>
    <property type="match status" value="2"/>
</dbReference>
<dbReference type="FunFam" id="1.10.246.10:FF:000002">
    <property type="entry name" value="Serum albumin"/>
    <property type="match status" value="2"/>
</dbReference>
<dbReference type="FunFam" id="1.10.246.10:FF:000003">
    <property type="entry name" value="Serum albumin"/>
    <property type="match status" value="1"/>
</dbReference>
<dbReference type="Gene3D" id="1.10.246.10">
    <property type="match status" value="6"/>
</dbReference>
<dbReference type="InterPro" id="IPR000264">
    <property type="entry name" value="ALB/AFP/VDB"/>
</dbReference>
<dbReference type="InterPro" id="IPR020858">
    <property type="entry name" value="Serum_albumin-like"/>
</dbReference>
<dbReference type="InterPro" id="IPR021177">
    <property type="entry name" value="Serum_albumin/AFP/Afamin"/>
</dbReference>
<dbReference type="InterPro" id="IPR020857">
    <property type="entry name" value="Serum_albumin_CS"/>
</dbReference>
<dbReference type="InterPro" id="IPR014760">
    <property type="entry name" value="Serum_albumin_N"/>
</dbReference>
<dbReference type="PANTHER" id="PTHR11385:SF14">
    <property type="entry name" value="AFAMIN"/>
    <property type="match status" value="1"/>
</dbReference>
<dbReference type="PANTHER" id="PTHR11385">
    <property type="entry name" value="SERUM ALBUMIN-RELATED"/>
    <property type="match status" value="1"/>
</dbReference>
<dbReference type="Pfam" id="PF00273">
    <property type="entry name" value="Serum_albumin"/>
    <property type="match status" value="3"/>
</dbReference>
<dbReference type="PIRSF" id="PIRSF002520">
    <property type="entry name" value="Serum_albumin_subgroup"/>
    <property type="match status" value="1"/>
</dbReference>
<dbReference type="PRINTS" id="PR00803">
    <property type="entry name" value="AFETOPROTEIN"/>
</dbReference>
<dbReference type="PRINTS" id="PR00802">
    <property type="entry name" value="SERUMALBUMIN"/>
</dbReference>
<dbReference type="SMART" id="SM00103">
    <property type="entry name" value="ALBUMIN"/>
    <property type="match status" value="3"/>
</dbReference>
<dbReference type="SUPFAM" id="SSF48552">
    <property type="entry name" value="Serum albumin-like"/>
    <property type="match status" value="3"/>
</dbReference>
<dbReference type="PROSITE" id="PS00212">
    <property type="entry name" value="ALBUMIN_1"/>
    <property type="match status" value="3"/>
</dbReference>
<dbReference type="PROSITE" id="PS51438">
    <property type="entry name" value="ALBUMIN_2"/>
    <property type="match status" value="3"/>
</dbReference>
<feature type="signal peptide" evidence="7">
    <location>
        <begin position="1"/>
        <end position="18"/>
    </location>
</feature>
<feature type="propeptide" id="PRO_0000001083">
    <location>
        <begin position="19"/>
        <end position="23"/>
    </location>
</feature>
<feature type="chain" id="PRO_0000001084" description="Albumin">
    <location>
        <begin position="24"/>
        <end position="615"/>
    </location>
</feature>
<feature type="domain" description="Albumin 1" evidence="5">
    <location>
        <begin position="22"/>
        <end position="214"/>
    </location>
</feature>
<feature type="domain" description="Albumin 2" evidence="5">
    <location>
        <begin position="215"/>
        <end position="407"/>
    </location>
</feature>
<feature type="domain" description="Albumin 3" evidence="5">
    <location>
        <begin position="408"/>
        <end position="605"/>
    </location>
</feature>
<feature type="binding site" evidence="1">
    <location>
        <position position="30"/>
    </location>
    <ligand>
        <name>Cu cation</name>
        <dbReference type="ChEBI" id="CHEBI:23378"/>
    </ligand>
</feature>
<feature type="binding site" evidence="3">
    <location>
        <position position="33"/>
    </location>
    <ligand>
        <name>Ca(2+)</name>
        <dbReference type="ChEBI" id="CHEBI:29108"/>
        <label>1</label>
    </ligand>
</feature>
<feature type="binding site" evidence="3">
    <location>
        <position position="40"/>
    </location>
    <ligand>
        <name>Ca(2+)</name>
        <dbReference type="ChEBI" id="CHEBI:29108"/>
        <label>2</label>
    </ligand>
</feature>
<feature type="binding site" evidence="3">
    <location>
        <position position="272"/>
    </location>
    <ligand>
        <name>Ca(2+)</name>
        <dbReference type="ChEBI" id="CHEBI:29108"/>
        <label>1</label>
    </ligand>
</feature>
<feature type="binding site" evidence="3">
    <location>
        <position position="277"/>
    </location>
    <ligand>
        <name>Ca(2+)</name>
        <dbReference type="ChEBI" id="CHEBI:29108"/>
        <label>1</label>
    </ligand>
</feature>
<feature type="binding site" evidence="2">
    <location>
        <position position="277"/>
    </location>
    <ligand>
        <name>Zn(2+)</name>
        <dbReference type="ChEBI" id="CHEBI:29105"/>
    </ligand>
</feature>
<feature type="binding site" evidence="3">
    <location>
        <position position="280"/>
    </location>
    <ligand>
        <name>Ca(2+)</name>
        <dbReference type="ChEBI" id="CHEBI:29108"/>
        <label>1</label>
    </ligand>
</feature>
<feature type="binding site" evidence="3">
    <location>
        <position position="283"/>
    </location>
    <ligand>
        <name>Ca(2+)</name>
        <dbReference type="ChEBI" id="CHEBI:29108"/>
        <label>2</label>
    </ligand>
</feature>
<feature type="glycosylation site" description="N-linked (GlcNAc...) asparagine" evidence="4">
    <location>
        <position position="500"/>
    </location>
</feature>
<feature type="disulfide bond" evidence="5">
    <location>
        <begin position="80"/>
        <end position="89"/>
    </location>
</feature>
<feature type="disulfide bond" evidence="5">
    <location>
        <begin position="102"/>
        <end position="118"/>
    </location>
</feature>
<feature type="disulfide bond" evidence="5">
    <location>
        <begin position="117"/>
        <end position="128"/>
    </location>
</feature>
<feature type="disulfide bond" evidence="5">
    <location>
        <begin position="152"/>
        <end position="197"/>
    </location>
</feature>
<feature type="disulfide bond" evidence="5">
    <location>
        <begin position="196"/>
        <end position="205"/>
    </location>
</feature>
<feature type="disulfide bond" evidence="5">
    <location>
        <begin position="228"/>
        <end position="274"/>
    </location>
</feature>
<feature type="disulfide bond" evidence="5">
    <location>
        <begin position="273"/>
        <end position="281"/>
    </location>
</feature>
<feature type="disulfide bond" evidence="5">
    <location>
        <begin position="293"/>
        <end position="307"/>
    </location>
</feature>
<feature type="disulfide bond" evidence="5">
    <location>
        <begin position="306"/>
        <end position="317"/>
    </location>
</feature>
<feature type="disulfide bond" evidence="5">
    <location>
        <begin position="344"/>
        <end position="389"/>
    </location>
</feature>
<feature type="disulfide bond" evidence="5">
    <location>
        <begin position="388"/>
        <end position="397"/>
    </location>
</feature>
<feature type="disulfide bond" evidence="5">
    <location>
        <begin position="420"/>
        <end position="466"/>
    </location>
</feature>
<feature type="disulfide bond" evidence="5">
    <location>
        <begin position="465"/>
        <end position="476"/>
    </location>
</feature>
<feature type="disulfide bond" evidence="5">
    <location>
        <begin position="489"/>
        <end position="505"/>
    </location>
</feature>
<feature type="disulfide bond" evidence="5">
    <location>
        <begin position="504"/>
        <end position="515"/>
    </location>
</feature>
<feature type="disulfide bond" evidence="5">
    <location>
        <begin position="542"/>
        <end position="587"/>
    </location>
</feature>
<feature type="disulfide bond" evidence="5">
    <location>
        <begin position="586"/>
        <end position="595"/>
    </location>
</feature>
<feature type="sequence conflict" description="In Ref. 3; AA sequence." evidence="8" ref="3">
    <original>F</original>
    <variation>M</variation>
    <location>
        <position position="24"/>
    </location>
</feature>
<protein>
    <recommendedName>
        <fullName>Albumin</fullName>
    </recommendedName>
    <alternativeName>
        <fullName>Alpha-livetin</fullName>
    </alternativeName>
    <allergenName>Gal d 5</allergenName>
</protein>
<proteinExistence type="evidence at protein level"/>
<evidence type="ECO:0000250" key="1"/>
<evidence type="ECO:0000250" key="2">
    <source>
        <dbReference type="UniProtKB" id="P02768"/>
    </source>
</evidence>
<evidence type="ECO:0000250" key="3">
    <source>
        <dbReference type="UniProtKB" id="P02769"/>
    </source>
</evidence>
<evidence type="ECO:0000255" key="4"/>
<evidence type="ECO:0000255" key="5">
    <source>
        <dbReference type="PROSITE-ProRule" id="PRU00769"/>
    </source>
</evidence>
<evidence type="ECO:0000269" key="6">
    <source>
    </source>
</evidence>
<evidence type="ECO:0000269" key="7">
    <source>
    </source>
</evidence>
<evidence type="ECO:0000305" key="8"/>
<reference key="1">
    <citation type="submission" date="1991-07" db="EMBL/GenBank/DDBJ databases">
        <authorList>
            <person name="Cassady A.I."/>
            <person name="Salklld C.K."/>
            <person name="Baverstock P."/>
            <person name="Wallace J.C."/>
        </authorList>
    </citation>
    <scope>NUCLEOTIDE SEQUENCE [MRNA]</scope>
    <source>
        <tissue>Liver</tissue>
    </source>
</reference>
<reference key="2">
    <citation type="journal article" date="1983" name="J. Biol. Chem.">
        <title>The 5' noncoding and flanking regions of the avian very low density apolipoprotein II and serum albumin genes. Homologies with the egg white protein genes.</title>
        <authorList>
            <person name="Hache R.J.G."/>
            <person name="Wiskocil R."/>
            <person name="Vasa M."/>
            <person name="Roy R.N."/>
            <person name="Lau P.C.K."/>
            <person name="Deeley R.G."/>
        </authorList>
    </citation>
    <scope>NUCLEOTIDE SEQUENCE [GENOMIC DNA] OF 1-28</scope>
</reference>
<reference key="3">
    <citation type="journal article" date="1977" name="Biochem. Biophys. Res. Commun.">
        <title>Chicken microsomal albumin: amino terminal sequence of chicken proalbumin.</title>
        <authorList>
            <person name="Rosen A.M."/>
            <person name="Geller D.M."/>
        </authorList>
    </citation>
    <scope>PROTEIN SEQUENCE OF 19-30</scope>
</reference>
<reference key="4">
    <citation type="journal article" date="2001" name="Allergy">
        <title>Chicken serum albumin (Gal d 5*) is a partially heat-labile inhalant and food allergen implicated in the bird-egg syndrome.</title>
        <authorList>
            <person name="Quirce S."/>
            <person name="Maranon F."/>
            <person name="Umpierrez A."/>
            <person name="de las Heras M."/>
            <person name="Fernandez-Caldas E."/>
            <person name="Sastre J."/>
        </authorList>
    </citation>
    <scope>ALLERGEN</scope>
</reference>
<name>ALBU_CHICK</name>